<gene>
    <name evidence="1" type="primary">gatY</name>
    <name type="ordered locus">STM3253</name>
</gene>
<reference key="1">
    <citation type="journal article" date="2001" name="Nature">
        <title>Complete genome sequence of Salmonella enterica serovar Typhimurium LT2.</title>
        <authorList>
            <person name="McClelland M."/>
            <person name="Sanderson K.E."/>
            <person name="Spieth J."/>
            <person name="Clifton S.W."/>
            <person name="Latreille P."/>
            <person name="Courtney L."/>
            <person name="Porwollik S."/>
            <person name="Ali J."/>
            <person name="Dante M."/>
            <person name="Du F."/>
            <person name="Hou S."/>
            <person name="Layman D."/>
            <person name="Leonard S."/>
            <person name="Nguyen C."/>
            <person name="Scott K."/>
            <person name="Holmes A."/>
            <person name="Grewal N."/>
            <person name="Mulvaney E."/>
            <person name="Ryan E."/>
            <person name="Sun H."/>
            <person name="Florea L."/>
            <person name="Miller W."/>
            <person name="Stoneking T."/>
            <person name="Nhan M."/>
            <person name="Waterston R."/>
            <person name="Wilson R.K."/>
        </authorList>
    </citation>
    <scope>NUCLEOTIDE SEQUENCE [LARGE SCALE GENOMIC DNA]</scope>
    <source>
        <strain>LT2 / SGSC1412 / ATCC 700720</strain>
    </source>
</reference>
<comment type="function">
    <text evidence="1">Catalytic subunit of the tagatose-1,6-bisphosphate aldolase GatYZ, which catalyzes the reversible aldol condensation of dihydroxyacetone phosphate (DHAP or glycerone-phosphate) with glyceraldehyde 3-phosphate (G3P) to produce tagatose 1,6-bisphosphate (TBP). Requires GatZ subunit for full activity and stability. Is involved in the catabolism of galactitol.</text>
</comment>
<comment type="catalytic activity">
    <reaction evidence="1">
        <text>D-tagatofuranose 1,6-bisphosphate = D-glyceraldehyde 3-phosphate + dihydroxyacetone phosphate</text>
        <dbReference type="Rhea" id="RHEA:22948"/>
        <dbReference type="ChEBI" id="CHEBI:57642"/>
        <dbReference type="ChEBI" id="CHEBI:58694"/>
        <dbReference type="ChEBI" id="CHEBI:59776"/>
        <dbReference type="EC" id="4.1.2.40"/>
    </reaction>
</comment>
<comment type="cofactor">
    <cofactor evidence="1">
        <name>Zn(2+)</name>
        <dbReference type="ChEBI" id="CHEBI:29105"/>
    </cofactor>
    <text evidence="1">Binds 1 zinc ion per subunit.</text>
</comment>
<comment type="pathway">
    <text evidence="1">Carbohydrate metabolism; D-tagatose 6-phosphate degradation; D-glyceraldehyde 3-phosphate and glycerone phosphate from D-tagatose 6-phosphate: step 2/2.</text>
</comment>
<comment type="subunit">
    <text evidence="1">Forms a complex with GatZ.</text>
</comment>
<comment type="similarity">
    <text evidence="1">Belongs to the class II fructose-bisphosphate aldolase family. TagBP aldolase GatY subfamily.</text>
</comment>
<dbReference type="EC" id="4.1.2.40" evidence="1"/>
<dbReference type="EMBL" id="AE006468">
    <property type="protein sequence ID" value="AAL22125.1"/>
    <property type="molecule type" value="Genomic_DNA"/>
</dbReference>
<dbReference type="RefSeq" id="NP_462166.1">
    <property type="nucleotide sequence ID" value="NC_003197.2"/>
</dbReference>
<dbReference type="RefSeq" id="WP_000469985.1">
    <property type="nucleotide sequence ID" value="NC_003197.2"/>
</dbReference>
<dbReference type="SMR" id="Q7CPQ7"/>
<dbReference type="STRING" id="99287.STM3253"/>
<dbReference type="PaxDb" id="99287-STM3253"/>
<dbReference type="GeneID" id="1254776"/>
<dbReference type="KEGG" id="stm:STM3253"/>
<dbReference type="PATRIC" id="fig|99287.12.peg.3452"/>
<dbReference type="HOGENOM" id="CLU_040088_0_1_6"/>
<dbReference type="OMA" id="FCLNAAH"/>
<dbReference type="PhylomeDB" id="Q7CPQ7"/>
<dbReference type="BioCyc" id="SENT99287:STM3253-MONOMER"/>
<dbReference type="UniPathway" id="UPA00704">
    <property type="reaction ID" value="UER00716"/>
</dbReference>
<dbReference type="Proteomes" id="UP000001014">
    <property type="component" value="Chromosome"/>
</dbReference>
<dbReference type="GO" id="GO:0005829">
    <property type="term" value="C:cytosol"/>
    <property type="evidence" value="ECO:0000318"/>
    <property type="project" value="GO_Central"/>
</dbReference>
<dbReference type="GO" id="GO:0009025">
    <property type="term" value="F:tagatose-bisphosphate aldolase activity"/>
    <property type="evidence" value="ECO:0000318"/>
    <property type="project" value="GO_Central"/>
</dbReference>
<dbReference type="GO" id="GO:0008270">
    <property type="term" value="F:zinc ion binding"/>
    <property type="evidence" value="ECO:0007669"/>
    <property type="project" value="UniProtKB-UniRule"/>
</dbReference>
<dbReference type="GO" id="GO:2001059">
    <property type="term" value="P:D-tagatose 6-phosphate catabolic process"/>
    <property type="evidence" value="ECO:0007669"/>
    <property type="project" value="UniProtKB-UniRule"/>
</dbReference>
<dbReference type="GO" id="GO:0019404">
    <property type="term" value="P:galactitol catabolic process"/>
    <property type="evidence" value="ECO:0007669"/>
    <property type="project" value="InterPro"/>
</dbReference>
<dbReference type="CDD" id="cd00947">
    <property type="entry name" value="TBP_aldolase_IIB"/>
    <property type="match status" value="1"/>
</dbReference>
<dbReference type="FunFam" id="3.20.20.70:FF:000043">
    <property type="entry name" value="D-tagatose-1,6-bisphosphate aldolase subunit GatY"/>
    <property type="match status" value="1"/>
</dbReference>
<dbReference type="Gene3D" id="3.20.20.70">
    <property type="entry name" value="Aldolase class I"/>
    <property type="match status" value="1"/>
</dbReference>
<dbReference type="HAMAP" id="MF_01294">
    <property type="entry name" value="TagBP_aldolase_GatY"/>
    <property type="match status" value="1"/>
</dbReference>
<dbReference type="InterPro" id="IPR013785">
    <property type="entry name" value="Aldolase_TIM"/>
</dbReference>
<dbReference type="InterPro" id="IPR050246">
    <property type="entry name" value="Class_II_FBP_aldolase"/>
</dbReference>
<dbReference type="InterPro" id="IPR000771">
    <property type="entry name" value="FBA_II"/>
</dbReference>
<dbReference type="InterPro" id="IPR011288">
    <property type="entry name" value="TagBP_ald_KbaY/GatY"/>
</dbReference>
<dbReference type="InterPro" id="IPR023955">
    <property type="entry name" value="TagBP_aldolase_GatY"/>
</dbReference>
<dbReference type="NCBIfam" id="TIGR00167">
    <property type="entry name" value="cbbA"/>
    <property type="match status" value="1"/>
</dbReference>
<dbReference type="NCBIfam" id="NF006626">
    <property type="entry name" value="PRK09195.1"/>
    <property type="match status" value="1"/>
</dbReference>
<dbReference type="NCBIfam" id="NF009374">
    <property type="entry name" value="PRK12737.1"/>
    <property type="match status" value="1"/>
</dbReference>
<dbReference type="NCBIfam" id="TIGR01858">
    <property type="entry name" value="tag_bisphos_ald"/>
    <property type="match status" value="1"/>
</dbReference>
<dbReference type="PANTHER" id="PTHR30304">
    <property type="entry name" value="D-TAGATOSE-1,6-BISPHOSPHATE ALDOLASE"/>
    <property type="match status" value="1"/>
</dbReference>
<dbReference type="PANTHER" id="PTHR30304:SF0">
    <property type="entry name" value="D-TAGATOSE-1,6-BISPHOSPHATE ALDOLASE SUBUNIT GATY-RELATED"/>
    <property type="match status" value="1"/>
</dbReference>
<dbReference type="Pfam" id="PF01116">
    <property type="entry name" value="F_bP_aldolase"/>
    <property type="match status" value="1"/>
</dbReference>
<dbReference type="PIRSF" id="PIRSF001359">
    <property type="entry name" value="F_bP_aldolase_II"/>
    <property type="match status" value="1"/>
</dbReference>
<dbReference type="SUPFAM" id="SSF51569">
    <property type="entry name" value="Aldolase"/>
    <property type="match status" value="1"/>
</dbReference>
<dbReference type="PROSITE" id="PS00602">
    <property type="entry name" value="ALDOLASE_CLASS_II_1"/>
    <property type="match status" value="1"/>
</dbReference>
<dbReference type="PROSITE" id="PS00806">
    <property type="entry name" value="ALDOLASE_CLASS_II_2"/>
    <property type="match status" value="1"/>
</dbReference>
<proteinExistence type="inferred from homology"/>
<accession>Q7CPQ7</accession>
<feature type="chain" id="PRO_0000355351" description="D-tagatose-1,6-bisphosphate aldolase subunit GatY">
    <location>
        <begin position="1"/>
        <end position="284"/>
    </location>
</feature>
<feature type="active site" description="Proton donor" evidence="1">
    <location>
        <position position="82"/>
    </location>
</feature>
<feature type="binding site" evidence="1">
    <location>
        <position position="83"/>
    </location>
    <ligand>
        <name>Zn(2+)</name>
        <dbReference type="ChEBI" id="CHEBI:29105"/>
        <note>catalytic</note>
    </ligand>
</feature>
<feature type="binding site" evidence="1">
    <location>
        <position position="180"/>
    </location>
    <ligand>
        <name>Zn(2+)</name>
        <dbReference type="ChEBI" id="CHEBI:29105"/>
        <note>catalytic</note>
    </ligand>
</feature>
<feature type="binding site" evidence="1">
    <location>
        <position position="181"/>
    </location>
    <ligand>
        <name>dihydroxyacetone phosphate</name>
        <dbReference type="ChEBI" id="CHEBI:57642"/>
    </ligand>
</feature>
<feature type="binding site" evidence="1">
    <location>
        <position position="208"/>
    </location>
    <ligand>
        <name>Zn(2+)</name>
        <dbReference type="ChEBI" id="CHEBI:29105"/>
        <note>catalytic</note>
    </ligand>
</feature>
<feature type="binding site" evidence="1">
    <location>
        <begin position="209"/>
        <end position="211"/>
    </location>
    <ligand>
        <name>dihydroxyacetone phosphate</name>
        <dbReference type="ChEBI" id="CHEBI:57642"/>
    </ligand>
</feature>
<feature type="binding site" evidence="1">
    <location>
        <begin position="230"/>
        <end position="233"/>
    </location>
    <ligand>
        <name>dihydroxyacetone phosphate</name>
        <dbReference type="ChEBI" id="CHEBI:57642"/>
    </ligand>
</feature>
<protein>
    <recommendedName>
        <fullName evidence="1">D-tagatose-1,6-bisphosphate aldolase subunit GatY</fullName>
        <shortName evidence="1">TBPA</shortName>
        <shortName evidence="1">TagBP aldolase</shortName>
        <ecNumber evidence="1">4.1.2.40</ecNumber>
    </recommendedName>
    <alternativeName>
        <fullName evidence="1">D-tagatose-bisphosphate aldolase class II</fullName>
    </alternativeName>
    <alternativeName>
        <fullName evidence="1">Tagatose-bisphosphate aldolase</fullName>
    </alternativeName>
</protein>
<evidence type="ECO:0000255" key="1">
    <source>
        <dbReference type="HAMAP-Rule" id="MF_01294"/>
    </source>
</evidence>
<sequence>MFIISSKNMLQKAQHAGYAVPAFNIHNLETLQVVVETAAEMRSPLIVAGTPGTFSYAGMGNIVAIAGDLAREYNLPLAIHLDHHESLADIESKVMAGIRSVMIDGSHFPFEENVALVKSVVDFCHRYDTSVEAELGRLGGIEDDLVVDSKDALYTNPQQAREFVARTGIDSLAVAIGTAHGMYAAEPKLDFERLAEIRALVDIPLVLHGASGLPESDIRQAISLGVCKVNVATELKIAFSDALKEYFLQNPKANDPRHYMQPAKQAMKEVVRKVIHVCGCEGQL</sequence>
<name>GATY_SALTY</name>
<organism>
    <name type="scientific">Salmonella typhimurium (strain LT2 / SGSC1412 / ATCC 700720)</name>
    <dbReference type="NCBI Taxonomy" id="99287"/>
    <lineage>
        <taxon>Bacteria</taxon>
        <taxon>Pseudomonadati</taxon>
        <taxon>Pseudomonadota</taxon>
        <taxon>Gammaproteobacteria</taxon>
        <taxon>Enterobacterales</taxon>
        <taxon>Enterobacteriaceae</taxon>
        <taxon>Salmonella</taxon>
    </lineage>
</organism>
<keyword id="KW-0298">Galactitol metabolism</keyword>
<keyword id="KW-0456">Lyase</keyword>
<keyword id="KW-0479">Metal-binding</keyword>
<keyword id="KW-1185">Reference proteome</keyword>
<keyword id="KW-0862">Zinc</keyword>